<comment type="function">
    <text evidence="1">Responsible for the transport of dicarboxylates such as succinate, fumarate, and malate from the periplasm across the membrane.</text>
</comment>
<comment type="subcellular location">
    <subcellularLocation>
        <location evidence="1">Cell inner membrane</location>
        <topology evidence="1">Multi-pass membrane protein</topology>
    </subcellularLocation>
</comment>
<comment type="similarity">
    <text evidence="1">Belongs to the dicarboxylate/amino acid:cation symporter (DAACS) (TC 2.A.23) family.</text>
</comment>
<feature type="chain" id="PRO_0000202101" description="C4-dicarboxylate transport protein">
    <location>
        <begin position="1"/>
        <end position="460"/>
    </location>
</feature>
<feature type="transmembrane region" description="Helical" evidence="1">
    <location>
        <begin position="21"/>
        <end position="38"/>
    </location>
</feature>
<feature type="transmembrane region" description="Helical" evidence="1">
    <location>
        <begin position="53"/>
        <end position="75"/>
    </location>
</feature>
<feature type="transmembrane region" description="Helical" evidence="1">
    <location>
        <begin position="88"/>
        <end position="110"/>
    </location>
</feature>
<feature type="transmembrane region" description="Helical" evidence="1">
    <location>
        <begin position="153"/>
        <end position="175"/>
    </location>
</feature>
<feature type="transmembrane region" description="Helical" evidence="1">
    <location>
        <begin position="196"/>
        <end position="218"/>
    </location>
</feature>
<feature type="transmembrane region" description="Helical" evidence="1">
    <location>
        <begin position="231"/>
        <end position="253"/>
    </location>
</feature>
<feature type="transmembrane region" description="Helical" evidence="1">
    <location>
        <begin position="301"/>
        <end position="323"/>
    </location>
</feature>
<feature type="transmembrane region" description="Helical" evidence="1">
    <location>
        <begin position="363"/>
        <end position="385"/>
    </location>
</feature>
<feature type="region of interest" description="Disordered" evidence="2">
    <location>
        <begin position="438"/>
        <end position="460"/>
    </location>
</feature>
<protein>
    <recommendedName>
        <fullName evidence="1">C4-dicarboxylate transport protein</fullName>
    </recommendedName>
</protein>
<dbReference type="EMBL" id="AE016853">
    <property type="protein sequence ID" value="AAO55202.1"/>
    <property type="molecule type" value="Genomic_DNA"/>
</dbReference>
<dbReference type="RefSeq" id="NP_791507.1">
    <property type="nucleotide sequence ID" value="NC_004578.1"/>
</dbReference>
<dbReference type="SMR" id="Q885Z9"/>
<dbReference type="STRING" id="223283.PSPTO_1682"/>
<dbReference type="KEGG" id="pst:PSPTO_1682"/>
<dbReference type="PATRIC" id="fig|223283.9.peg.1708"/>
<dbReference type="eggNOG" id="COG1301">
    <property type="taxonomic scope" value="Bacteria"/>
</dbReference>
<dbReference type="HOGENOM" id="CLU_019375_7_0_6"/>
<dbReference type="OrthoDB" id="9766690at2"/>
<dbReference type="PhylomeDB" id="Q885Z9"/>
<dbReference type="Proteomes" id="UP000002515">
    <property type="component" value="Chromosome"/>
</dbReference>
<dbReference type="GO" id="GO:0005886">
    <property type="term" value="C:plasma membrane"/>
    <property type="evidence" value="ECO:0007669"/>
    <property type="project" value="UniProtKB-SubCell"/>
</dbReference>
<dbReference type="GO" id="GO:0015138">
    <property type="term" value="F:fumarate transmembrane transporter activity"/>
    <property type="evidence" value="ECO:0007669"/>
    <property type="project" value="TreeGrafter"/>
</dbReference>
<dbReference type="GO" id="GO:0015366">
    <property type="term" value="F:malate:proton symporter activity"/>
    <property type="evidence" value="ECO:0007669"/>
    <property type="project" value="TreeGrafter"/>
</dbReference>
<dbReference type="GO" id="GO:0015141">
    <property type="term" value="F:succinate transmembrane transporter activity"/>
    <property type="evidence" value="ECO:0007669"/>
    <property type="project" value="TreeGrafter"/>
</dbReference>
<dbReference type="GO" id="GO:0070778">
    <property type="term" value="P:L-aspartate transmembrane transport"/>
    <property type="evidence" value="ECO:0007669"/>
    <property type="project" value="TreeGrafter"/>
</dbReference>
<dbReference type="FunFam" id="1.10.3860.10:FF:000001">
    <property type="entry name" value="C4-dicarboxylate transport protein"/>
    <property type="match status" value="1"/>
</dbReference>
<dbReference type="Gene3D" id="1.10.3860.10">
    <property type="entry name" value="Sodium:dicarboxylate symporter"/>
    <property type="match status" value="1"/>
</dbReference>
<dbReference type="HAMAP" id="MF_01300">
    <property type="entry name" value="C4_dicarb_transport"/>
    <property type="match status" value="1"/>
</dbReference>
<dbReference type="InterPro" id="IPR023954">
    <property type="entry name" value="C4_dicarb_transport"/>
</dbReference>
<dbReference type="InterPro" id="IPR001991">
    <property type="entry name" value="Na-dicarboxylate_symporter"/>
</dbReference>
<dbReference type="InterPro" id="IPR018107">
    <property type="entry name" value="Na-dicarboxylate_symporter_CS"/>
</dbReference>
<dbReference type="InterPro" id="IPR036458">
    <property type="entry name" value="Na:dicarbo_symporter_sf"/>
</dbReference>
<dbReference type="NCBIfam" id="NF002461">
    <property type="entry name" value="PRK01663.1"/>
    <property type="match status" value="1"/>
</dbReference>
<dbReference type="NCBIfam" id="NF009587">
    <property type="entry name" value="PRK13027.1"/>
    <property type="match status" value="1"/>
</dbReference>
<dbReference type="PANTHER" id="PTHR42865:SF1">
    <property type="entry name" value="AEROBIC C4-DICARBOXYLATE TRANSPORT PROTEIN"/>
    <property type="match status" value="1"/>
</dbReference>
<dbReference type="PANTHER" id="PTHR42865">
    <property type="entry name" value="PROTON/GLUTAMATE-ASPARTATE SYMPORTER"/>
    <property type="match status" value="1"/>
</dbReference>
<dbReference type="Pfam" id="PF00375">
    <property type="entry name" value="SDF"/>
    <property type="match status" value="1"/>
</dbReference>
<dbReference type="PRINTS" id="PR00173">
    <property type="entry name" value="EDTRNSPORT"/>
</dbReference>
<dbReference type="SUPFAM" id="SSF118215">
    <property type="entry name" value="Proton glutamate symport protein"/>
    <property type="match status" value="1"/>
</dbReference>
<dbReference type="PROSITE" id="PS00713">
    <property type="entry name" value="NA_DICARBOXYL_SYMP_1"/>
    <property type="match status" value="1"/>
</dbReference>
<dbReference type="PROSITE" id="PS00714">
    <property type="entry name" value="NA_DICARBOXYL_SYMP_2"/>
    <property type="match status" value="1"/>
</dbReference>
<organism>
    <name type="scientific">Pseudomonas syringae pv. tomato (strain ATCC BAA-871 / DC3000)</name>
    <dbReference type="NCBI Taxonomy" id="223283"/>
    <lineage>
        <taxon>Bacteria</taxon>
        <taxon>Pseudomonadati</taxon>
        <taxon>Pseudomonadota</taxon>
        <taxon>Gammaproteobacteria</taxon>
        <taxon>Pseudomonadales</taxon>
        <taxon>Pseudomonadaceae</taxon>
        <taxon>Pseudomonas</taxon>
    </lineage>
</organism>
<proteinExistence type="inferred from homology"/>
<reference key="1">
    <citation type="journal article" date="2003" name="Proc. Natl. Acad. Sci. U.S.A.">
        <title>The complete genome sequence of the Arabidopsis and tomato pathogen Pseudomonas syringae pv. tomato DC3000.</title>
        <authorList>
            <person name="Buell C.R."/>
            <person name="Joardar V."/>
            <person name="Lindeberg M."/>
            <person name="Selengut J."/>
            <person name="Paulsen I.T."/>
            <person name="Gwinn M.L."/>
            <person name="Dodson R.J."/>
            <person name="DeBoy R.T."/>
            <person name="Durkin A.S."/>
            <person name="Kolonay J.F."/>
            <person name="Madupu R."/>
            <person name="Daugherty S.C."/>
            <person name="Brinkac L.M."/>
            <person name="Beanan M.J."/>
            <person name="Haft D.H."/>
            <person name="Nelson W.C."/>
            <person name="Davidsen T.M."/>
            <person name="Zafar N."/>
            <person name="Zhou L."/>
            <person name="Liu J."/>
            <person name="Yuan Q."/>
            <person name="Khouri H.M."/>
            <person name="Fedorova N.B."/>
            <person name="Tran B."/>
            <person name="Russell D."/>
            <person name="Berry K.J."/>
            <person name="Utterback T.R."/>
            <person name="Van Aken S.E."/>
            <person name="Feldblyum T.V."/>
            <person name="D'Ascenzo M."/>
            <person name="Deng W.-L."/>
            <person name="Ramos A.R."/>
            <person name="Alfano J.R."/>
            <person name="Cartinhour S."/>
            <person name="Chatterjee A.K."/>
            <person name="Delaney T.P."/>
            <person name="Lazarowitz S.G."/>
            <person name="Martin G.B."/>
            <person name="Schneider D.J."/>
            <person name="Tang X."/>
            <person name="Bender C.L."/>
            <person name="White O."/>
            <person name="Fraser C.M."/>
            <person name="Collmer A."/>
        </authorList>
    </citation>
    <scope>NUCLEOTIDE SEQUENCE [LARGE SCALE GENOMIC DNA]</scope>
    <source>
        <strain>ATCC BAA-871 / DC3000</strain>
    </source>
</reference>
<accession>Q885Z9</accession>
<gene>
    <name evidence="1" type="primary">dctA-1</name>
    <name type="ordered locus">PSPTO_1682</name>
</gene>
<name>DCTA_PSESM</name>
<evidence type="ECO:0000255" key="1">
    <source>
        <dbReference type="HAMAP-Rule" id="MF_01300"/>
    </source>
</evidence>
<evidence type="ECO:0000256" key="2">
    <source>
        <dbReference type="SAM" id="MobiDB-lite"/>
    </source>
</evidence>
<sequence>MPTTPLRKTAMTTRQPIYKSLYFQVIVAIVIGILIGHFYPETGKALKPLGDGFIKLIKMVIAPIIFCTVVSGIAGMQNMKSVGKTGGYALLYFEIVSTIALLIGLIVVNVVQPGAGMNIDVSTLDASKIAAYVTAGKDQSIVGFILNVIPNTIVGAFANGDILQVLMFSVIFGFALHRLGSYGKPVLDFIDRFAHVMFNIINMIMKLAPIGAFGAMAFTIGAYGVSSLVQLGQLMICFYITCVLFVVLVLGSICRAHGFSIFKLVRYIREELLIVLGTSSSESALPRMLIKMERLGAQKSVVGLVIPTGYSFNLDGTSIYLTMAAVFIAQATNTHMDITHQITLLLVLLLSSKGAAGVTGSGFIVLAATLSAVGHLPVAGLALILGIDRFMSEARALTNLVGNAVATVVVAKWVGELDTDKLQSELASGGSAILETRPEDDLGVAEGPTPANAVNTTKTV</sequence>
<keyword id="KW-0997">Cell inner membrane</keyword>
<keyword id="KW-1003">Cell membrane</keyword>
<keyword id="KW-0472">Membrane</keyword>
<keyword id="KW-1185">Reference proteome</keyword>
<keyword id="KW-0769">Symport</keyword>
<keyword id="KW-0812">Transmembrane</keyword>
<keyword id="KW-1133">Transmembrane helix</keyword>
<keyword id="KW-0813">Transport</keyword>